<keyword id="KW-0539">Nucleus</keyword>
<keyword id="KW-0597">Phosphoprotein</keyword>
<keyword id="KW-1185">Reference proteome</keyword>
<keyword id="KW-0690">Ribosome biogenesis</keyword>
<keyword id="KW-0698">rRNA processing</keyword>
<gene>
    <name type="primary">pxr1</name>
    <name type="ORF">SPAC890.05</name>
</gene>
<protein>
    <recommendedName>
        <fullName>Protein pxr1</fullName>
    </recommendedName>
    <alternativeName>
        <fullName>PinX1-related protein 1</fullName>
    </alternativeName>
</protein>
<proteinExistence type="evidence at protein level"/>
<reference key="1">
    <citation type="journal article" date="2002" name="Nature">
        <title>The genome sequence of Schizosaccharomyces pombe.</title>
        <authorList>
            <person name="Wood V."/>
            <person name="Gwilliam R."/>
            <person name="Rajandream M.A."/>
            <person name="Lyne M.H."/>
            <person name="Lyne R."/>
            <person name="Stewart A."/>
            <person name="Sgouros J.G."/>
            <person name="Peat N."/>
            <person name="Hayles J."/>
            <person name="Baker S.G."/>
            <person name="Basham D."/>
            <person name="Bowman S."/>
            <person name="Brooks K."/>
            <person name="Brown D."/>
            <person name="Brown S."/>
            <person name="Chillingworth T."/>
            <person name="Churcher C.M."/>
            <person name="Collins M."/>
            <person name="Connor R."/>
            <person name="Cronin A."/>
            <person name="Davis P."/>
            <person name="Feltwell T."/>
            <person name="Fraser A."/>
            <person name="Gentles S."/>
            <person name="Goble A."/>
            <person name="Hamlin N."/>
            <person name="Harris D.E."/>
            <person name="Hidalgo J."/>
            <person name="Hodgson G."/>
            <person name="Holroyd S."/>
            <person name="Hornsby T."/>
            <person name="Howarth S."/>
            <person name="Huckle E.J."/>
            <person name="Hunt S."/>
            <person name="Jagels K."/>
            <person name="James K.D."/>
            <person name="Jones L."/>
            <person name="Jones M."/>
            <person name="Leather S."/>
            <person name="McDonald S."/>
            <person name="McLean J."/>
            <person name="Mooney P."/>
            <person name="Moule S."/>
            <person name="Mungall K.L."/>
            <person name="Murphy L.D."/>
            <person name="Niblett D."/>
            <person name="Odell C."/>
            <person name="Oliver K."/>
            <person name="O'Neil S."/>
            <person name="Pearson D."/>
            <person name="Quail M.A."/>
            <person name="Rabbinowitsch E."/>
            <person name="Rutherford K.M."/>
            <person name="Rutter S."/>
            <person name="Saunders D."/>
            <person name="Seeger K."/>
            <person name="Sharp S."/>
            <person name="Skelton J."/>
            <person name="Simmonds M.N."/>
            <person name="Squares R."/>
            <person name="Squares S."/>
            <person name="Stevens K."/>
            <person name="Taylor K."/>
            <person name="Taylor R.G."/>
            <person name="Tivey A."/>
            <person name="Walsh S.V."/>
            <person name="Warren T."/>
            <person name="Whitehead S."/>
            <person name="Woodward J.R."/>
            <person name="Volckaert G."/>
            <person name="Aert R."/>
            <person name="Robben J."/>
            <person name="Grymonprez B."/>
            <person name="Weltjens I."/>
            <person name="Vanstreels E."/>
            <person name="Rieger M."/>
            <person name="Schaefer M."/>
            <person name="Mueller-Auer S."/>
            <person name="Gabel C."/>
            <person name="Fuchs M."/>
            <person name="Duesterhoeft A."/>
            <person name="Fritzc C."/>
            <person name="Holzer E."/>
            <person name="Moestl D."/>
            <person name="Hilbert H."/>
            <person name="Borzym K."/>
            <person name="Langer I."/>
            <person name="Beck A."/>
            <person name="Lehrach H."/>
            <person name="Reinhardt R."/>
            <person name="Pohl T.M."/>
            <person name="Eger P."/>
            <person name="Zimmermann W."/>
            <person name="Wedler H."/>
            <person name="Wambutt R."/>
            <person name="Purnelle B."/>
            <person name="Goffeau A."/>
            <person name="Cadieu E."/>
            <person name="Dreano S."/>
            <person name="Gloux S."/>
            <person name="Lelaure V."/>
            <person name="Mottier S."/>
            <person name="Galibert F."/>
            <person name="Aves S.J."/>
            <person name="Xiang Z."/>
            <person name="Hunt C."/>
            <person name="Moore K."/>
            <person name="Hurst S.M."/>
            <person name="Lucas M."/>
            <person name="Rochet M."/>
            <person name="Gaillardin C."/>
            <person name="Tallada V.A."/>
            <person name="Garzon A."/>
            <person name="Thode G."/>
            <person name="Daga R.R."/>
            <person name="Cruzado L."/>
            <person name="Jimenez J."/>
            <person name="Sanchez M."/>
            <person name="del Rey F."/>
            <person name="Benito J."/>
            <person name="Dominguez A."/>
            <person name="Revuelta J.L."/>
            <person name="Moreno S."/>
            <person name="Armstrong J."/>
            <person name="Forsburg S.L."/>
            <person name="Cerutti L."/>
            <person name="Lowe T."/>
            <person name="McCombie W.R."/>
            <person name="Paulsen I."/>
            <person name="Potashkin J."/>
            <person name="Shpakovski G.V."/>
            <person name="Ussery D."/>
            <person name="Barrell B.G."/>
            <person name="Nurse P."/>
        </authorList>
    </citation>
    <scope>NUCLEOTIDE SEQUENCE [LARGE SCALE GENOMIC DNA]</scope>
    <source>
        <strain>972 / ATCC 24843</strain>
    </source>
</reference>
<reference key="2">
    <citation type="journal article" date="2006" name="Nat. Biotechnol.">
        <title>ORFeome cloning and global analysis of protein localization in the fission yeast Schizosaccharomyces pombe.</title>
        <authorList>
            <person name="Matsuyama A."/>
            <person name="Arai R."/>
            <person name="Yashiroda Y."/>
            <person name="Shirai A."/>
            <person name="Kamata A."/>
            <person name="Sekido S."/>
            <person name="Kobayashi Y."/>
            <person name="Hashimoto A."/>
            <person name="Hamamoto M."/>
            <person name="Hiraoka Y."/>
            <person name="Horinouchi S."/>
            <person name="Yoshida M."/>
        </authorList>
    </citation>
    <scope>SUBCELLULAR LOCATION [LARGE SCALE ANALYSIS]</scope>
</reference>
<reference key="3">
    <citation type="journal article" date="2008" name="J. Proteome Res.">
        <title>Phosphoproteome analysis of fission yeast.</title>
        <authorList>
            <person name="Wilson-Grady J.T."/>
            <person name="Villen J."/>
            <person name="Gygi S.P."/>
        </authorList>
    </citation>
    <scope>PHOSPHORYLATION [LARGE SCALE ANALYSIS] AT SER-159 AND SER-160</scope>
    <scope>IDENTIFICATION BY MASS SPECTROMETRY</scope>
</reference>
<accession>Q9URX9</accession>
<dbReference type="EMBL" id="CU329670">
    <property type="protein sequence ID" value="CAB63496.1"/>
    <property type="molecule type" value="Genomic_DNA"/>
</dbReference>
<dbReference type="PIR" id="T50261">
    <property type="entry name" value="T50261"/>
</dbReference>
<dbReference type="RefSeq" id="NP_594823.1">
    <property type="nucleotide sequence ID" value="NM_001020252.2"/>
</dbReference>
<dbReference type="BioGRID" id="279950">
    <property type="interactions" value="2"/>
</dbReference>
<dbReference type="STRING" id="284812.Q9URX9"/>
<dbReference type="iPTMnet" id="Q9URX9"/>
<dbReference type="PaxDb" id="4896-SPAC890.05.1"/>
<dbReference type="EnsemblFungi" id="SPAC890.05.1">
    <property type="protein sequence ID" value="SPAC890.05.1:pep"/>
    <property type="gene ID" value="SPAC890.05"/>
</dbReference>
<dbReference type="GeneID" id="2543532"/>
<dbReference type="KEGG" id="spo:2543532"/>
<dbReference type="PomBase" id="SPAC890.05">
    <property type="gene designation" value="pxr1"/>
</dbReference>
<dbReference type="VEuPathDB" id="FungiDB:SPAC890.05"/>
<dbReference type="eggNOG" id="KOG2809">
    <property type="taxonomic scope" value="Eukaryota"/>
</dbReference>
<dbReference type="HOGENOM" id="CLU_052839_0_0_1"/>
<dbReference type="InParanoid" id="Q9URX9"/>
<dbReference type="OMA" id="PCWDQSS"/>
<dbReference type="PhylomeDB" id="Q9URX9"/>
<dbReference type="PRO" id="PR:Q9URX9"/>
<dbReference type="Proteomes" id="UP000002485">
    <property type="component" value="Chromosome I"/>
</dbReference>
<dbReference type="GO" id="GO:0005730">
    <property type="term" value="C:nucleolus"/>
    <property type="evidence" value="ECO:0000250"/>
    <property type="project" value="PomBase"/>
</dbReference>
<dbReference type="GO" id="GO:0005634">
    <property type="term" value="C:nucleus"/>
    <property type="evidence" value="ECO:0007005"/>
    <property type="project" value="PomBase"/>
</dbReference>
<dbReference type="GO" id="GO:0003723">
    <property type="term" value="F:RNA binding"/>
    <property type="evidence" value="ECO:0000255"/>
    <property type="project" value="PomBase"/>
</dbReference>
<dbReference type="GO" id="GO:0042254">
    <property type="term" value="P:ribosome biogenesis"/>
    <property type="evidence" value="ECO:0000250"/>
    <property type="project" value="PomBase"/>
</dbReference>
<dbReference type="GO" id="GO:0006364">
    <property type="term" value="P:rRNA processing"/>
    <property type="evidence" value="ECO:0007669"/>
    <property type="project" value="UniProtKB-KW"/>
</dbReference>
<dbReference type="InterPro" id="IPR000467">
    <property type="entry name" value="G_patch_dom"/>
</dbReference>
<dbReference type="InterPro" id="IPR050656">
    <property type="entry name" value="PINX1"/>
</dbReference>
<dbReference type="PANTHER" id="PTHR23149">
    <property type="entry name" value="G PATCH DOMAIN CONTAINING PROTEIN"/>
    <property type="match status" value="1"/>
</dbReference>
<dbReference type="PANTHER" id="PTHR23149:SF31">
    <property type="entry name" value="PROTEIN PXR1"/>
    <property type="match status" value="1"/>
</dbReference>
<dbReference type="Pfam" id="PF01585">
    <property type="entry name" value="G-patch"/>
    <property type="match status" value="1"/>
</dbReference>
<dbReference type="SMART" id="SM00443">
    <property type="entry name" value="G_patch"/>
    <property type="match status" value="1"/>
</dbReference>
<dbReference type="PROSITE" id="PS50174">
    <property type="entry name" value="G_PATCH"/>
    <property type="match status" value="1"/>
</dbReference>
<name>PXR1_SCHPO</name>
<comment type="function">
    <text evidence="1">Involved in rRNA-processing at A0, A1 and A2 sites and negatively regulates telomerase.</text>
</comment>
<comment type="subcellular location">
    <subcellularLocation>
        <location evidence="4">Nucleus</location>
        <location evidence="4">Nucleolus</location>
    </subcellularLocation>
</comment>
<comment type="similarity">
    <text evidence="6">Belongs to the PINX1 family.</text>
</comment>
<evidence type="ECO:0000250" key="1"/>
<evidence type="ECO:0000255" key="2">
    <source>
        <dbReference type="PROSITE-ProRule" id="PRU00092"/>
    </source>
</evidence>
<evidence type="ECO:0000256" key="3">
    <source>
        <dbReference type="SAM" id="MobiDB-lite"/>
    </source>
</evidence>
<evidence type="ECO:0000269" key="4">
    <source>
    </source>
</evidence>
<evidence type="ECO:0000269" key="5">
    <source>
    </source>
</evidence>
<evidence type="ECO:0000305" key="6"/>
<sequence>MGLAGVKKKQQIGVDPRNSKWAKDTNRLGFKLLSSYGWVNGNGLGEKQHGRIHNIKVSLKDDTLGIGAKATNDLEWSGLGEFNAIFGRLNGDESAYGVYAEKAKVQQLTYERQSANEKGLKSLELSRRFVLGGTFTSEFSEWMQKAEEDEDRVCEDASSSDEAKREKRKKHSSKKKSKKKTSTGSALDPKKLEKITKKKKKEHKKKDKESSSKKRKSGSSDKEEKKKKKIKLKDKPESTSSVEKVKEGNRPASIHFHTRRKFLAQKRAAVSDPVALREILGIKG</sequence>
<organism>
    <name type="scientific">Schizosaccharomyces pombe (strain 972 / ATCC 24843)</name>
    <name type="common">Fission yeast</name>
    <dbReference type="NCBI Taxonomy" id="284812"/>
    <lineage>
        <taxon>Eukaryota</taxon>
        <taxon>Fungi</taxon>
        <taxon>Dikarya</taxon>
        <taxon>Ascomycota</taxon>
        <taxon>Taphrinomycotina</taxon>
        <taxon>Schizosaccharomycetes</taxon>
        <taxon>Schizosaccharomycetales</taxon>
        <taxon>Schizosaccharomycetaceae</taxon>
        <taxon>Schizosaccharomyces</taxon>
    </lineage>
</organism>
<feature type="chain" id="PRO_0000303955" description="Protein pxr1">
    <location>
        <begin position="1"/>
        <end position="284"/>
    </location>
</feature>
<feature type="domain" description="G-patch" evidence="2">
    <location>
        <begin position="25"/>
        <end position="71"/>
    </location>
</feature>
<feature type="region of interest" description="Disordered" evidence="3">
    <location>
        <begin position="149"/>
        <end position="253"/>
    </location>
</feature>
<feature type="compositionally biased region" description="Basic residues" evidence="3">
    <location>
        <begin position="166"/>
        <end position="181"/>
    </location>
</feature>
<feature type="compositionally biased region" description="Basic residues" evidence="3">
    <location>
        <begin position="196"/>
        <end position="206"/>
    </location>
</feature>
<feature type="compositionally biased region" description="Basic and acidic residues" evidence="3">
    <location>
        <begin position="207"/>
        <end position="224"/>
    </location>
</feature>
<feature type="compositionally biased region" description="Basic and acidic residues" evidence="3">
    <location>
        <begin position="233"/>
        <end position="249"/>
    </location>
</feature>
<feature type="modified residue" description="Phosphoserine" evidence="5">
    <location>
        <position position="159"/>
    </location>
</feature>
<feature type="modified residue" description="Phosphoserine" evidence="5">
    <location>
        <position position="160"/>
    </location>
</feature>